<organism>
    <name type="scientific">Bifidobacterium adolescentis (strain ATCC 15703 / DSM 20083 / NCTC 11814 / E194a)</name>
    <dbReference type="NCBI Taxonomy" id="367928"/>
    <lineage>
        <taxon>Bacteria</taxon>
        <taxon>Bacillati</taxon>
        <taxon>Actinomycetota</taxon>
        <taxon>Actinomycetes</taxon>
        <taxon>Bifidobacteriales</taxon>
        <taxon>Bifidobacteriaceae</taxon>
        <taxon>Bifidobacterium</taxon>
    </lineage>
</organism>
<dbReference type="EC" id="2.4.1.227" evidence="1"/>
<dbReference type="EMBL" id="AP009256">
    <property type="protein sequence ID" value="BAF39882.1"/>
    <property type="molecule type" value="Genomic_DNA"/>
</dbReference>
<dbReference type="RefSeq" id="WP_011743443.1">
    <property type="nucleotide sequence ID" value="NZ_CAXVNC010000002.1"/>
</dbReference>
<dbReference type="SMR" id="A1A2E9"/>
<dbReference type="STRING" id="367928.BAD_1101"/>
<dbReference type="CAZy" id="GT28">
    <property type="family name" value="Glycosyltransferase Family 28"/>
</dbReference>
<dbReference type="PaxDb" id="1680-BADO_1151"/>
<dbReference type="GeneID" id="4556378"/>
<dbReference type="KEGG" id="bad:BAD_1101"/>
<dbReference type="HOGENOM" id="CLU_037404_1_0_11"/>
<dbReference type="UniPathway" id="UPA00219"/>
<dbReference type="Proteomes" id="UP000008702">
    <property type="component" value="Chromosome"/>
</dbReference>
<dbReference type="GO" id="GO:0005886">
    <property type="term" value="C:plasma membrane"/>
    <property type="evidence" value="ECO:0007669"/>
    <property type="project" value="UniProtKB-SubCell"/>
</dbReference>
<dbReference type="GO" id="GO:0051991">
    <property type="term" value="F:UDP-N-acetyl-D-glucosamine:N-acetylmuramoyl-L-alanyl-D-glutamyl-meso-2,6-diaminopimelyl-D-alanyl-D-alanine-diphosphoundecaprenol 4-beta-N-acetylglucosaminlytransferase activity"/>
    <property type="evidence" value="ECO:0007669"/>
    <property type="project" value="RHEA"/>
</dbReference>
<dbReference type="GO" id="GO:0050511">
    <property type="term" value="F:undecaprenyldiphospho-muramoylpentapeptide beta-N-acetylglucosaminyltransferase activity"/>
    <property type="evidence" value="ECO:0007669"/>
    <property type="project" value="UniProtKB-UniRule"/>
</dbReference>
<dbReference type="GO" id="GO:0005975">
    <property type="term" value="P:carbohydrate metabolic process"/>
    <property type="evidence" value="ECO:0007669"/>
    <property type="project" value="InterPro"/>
</dbReference>
<dbReference type="GO" id="GO:0051301">
    <property type="term" value="P:cell division"/>
    <property type="evidence" value="ECO:0007669"/>
    <property type="project" value="UniProtKB-KW"/>
</dbReference>
<dbReference type="GO" id="GO:0071555">
    <property type="term" value="P:cell wall organization"/>
    <property type="evidence" value="ECO:0007669"/>
    <property type="project" value="UniProtKB-KW"/>
</dbReference>
<dbReference type="GO" id="GO:0030259">
    <property type="term" value="P:lipid glycosylation"/>
    <property type="evidence" value="ECO:0007669"/>
    <property type="project" value="UniProtKB-UniRule"/>
</dbReference>
<dbReference type="GO" id="GO:0009252">
    <property type="term" value="P:peptidoglycan biosynthetic process"/>
    <property type="evidence" value="ECO:0007669"/>
    <property type="project" value="UniProtKB-UniRule"/>
</dbReference>
<dbReference type="GO" id="GO:0008360">
    <property type="term" value="P:regulation of cell shape"/>
    <property type="evidence" value="ECO:0007669"/>
    <property type="project" value="UniProtKB-KW"/>
</dbReference>
<dbReference type="CDD" id="cd03785">
    <property type="entry name" value="GT28_MurG"/>
    <property type="match status" value="1"/>
</dbReference>
<dbReference type="Gene3D" id="3.40.50.2000">
    <property type="entry name" value="Glycogen Phosphorylase B"/>
    <property type="match status" value="2"/>
</dbReference>
<dbReference type="HAMAP" id="MF_00033">
    <property type="entry name" value="MurG"/>
    <property type="match status" value="1"/>
</dbReference>
<dbReference type="InterPro" id="IPR006009">
    <property type="entry name" value="GlcNAc_MurG"/>
</dbReference>
<dbReference type="InterPro" id="IPR007235">
    <property type="entry name" value="Glyco_trans_28_C"/>
</dbReference>
<dbReference type="InterPro" id="IPR004276">
    <property type="entry name" value="GlycoTrans_28_N"/>
</dbReference>
<dbReference type="PANTHER" id="PTHR21015:SF22">
    <property type="entry name" value="GLYCOSYLTRANSFERASE"/>
    <property type="match status" value="1"/>
</dbReference>
<dbReference type="PANTHER" id="PTHR21015">
    <property type="entry name" value="UDP-N-ACETYLGLUCOSAMINE--N-ACETYLMURAMYL-(PENTAPEPTIDE) PYROPHOSPHORYL-UNDECAPRENOL N-ACETYLGLUCOSAMINE TRANSFERASE 1"/>
    <property type="match status" value="1"/>
</dbReference>
<dbReference type="Pfam" id="PF04101">
    <property type="entry name" value="Glyco_tran_28_C"/>
    <property type="match status" value="1"/>
</dbReference>
<dbReference type="Pfam" id="PF03033">
    <property type="entry name" value="Glyco_transf_28"/>
    <property type="match status" value="1"/>
</dbReference>
<dbReference type="SUPFAM" id="SSF53756">
    <property type="entry name" value="UDP-Glycosyltransferase/glycogen phosphorylase"/>
    <property type="match status" value="1"/>
</dbReference>
<proteinExistence type="inferred from homology"/>
<accession>A1A2E9</accession>
<sequence length="393" mass="41547">MSNQKHIVLAGGGTAGHVNPLLAVAHVIRELEPEADIAVVGTAVGLERDLVPQAGFELETIEKVPFPRRPNKAALQFPAKWKAEKAKVRDILTRHQAQVVVGFGGYTSAPVYAAAHSMGIPIAIHEQNARAGMANKLGARWASMIGAAYAQPGLKPRRGVEVERVGLPLRPAIARLASDLEHDRTATRKAAAAQLGVDPDRPLVVITGGSLGAVNVNRAVAASAKDLLAHAQVIHLTGKGKDDEVRSLVSVSAGEDVLGELGPDHVSDGDYRVAPYLERIDLAFACADLIICRSGAGTVSELTALGLPAIYVPLPIGNGEQRFNAQPVVDAEGGLMVADGDFTPDWVRGHVPELLADPDKLSRYGANAWKYGIRDAAEVMAKRVLALIDQPAD</sequence>
<reference key="1">
    <citation type="submission" date="2006-12" db="EMBL/GenBank/DDBJ databases">
        <title>Bifidobacterium adolescentis complete genome sequence.</title>
        <authorList>
            <person name="Suzuki T."/>
            <person name="Tsuda Y."/>
            <person name="Kanou N."/>
            <person name="Inoue T."/>
            <person name="Kumazaki K."/>
            <person name="Nagano S."/>
            <person name="Hirai S."/>
            <person name="Tanaka K."/>
            <person name="Watanabe K."/>
        </authorList>
    </citation>
    <scope>NUCLEOTIDE SEQUENCE [LARGE SCALE GENOMIC DNA]</scope>
    <source>
        <strain>ATCC 15703 / DSM 20083 / NCTC 11814 / E194a</strain>
    </source>
</reference>
<keyword id="KW-0131">Cell cycle</keyword>
<keyword id="KW-0132">Cell division</keyword>
<keyword id="KW-1003">Cell membrane</keyword>
<keyword id="KW-0133">Cell shape</keyword>
<keyword id="KW-0961">Cell wall biogenesis/degradation</keyword>
<keyword id="KW-0328">Glycosyltransferase</keyword>
<keyword id="KW-0472">Membrane</keyword>
<keyword id="KW-0573">Peptidoglycan synthesis</keyword>
<keyword id="KW-1185">Reference proteome</keyword>
<keyword id="KW-0808">Transferase</keyword>
<name>MURG_BIFAA</name>
<gene>
    <name evidence="1" type="primary">murG</name>
    <name type="ordered locus">BAD_1101</name>
</gene>
<comment type="function">
    <text evidence="1">Cell wall formation. Catalyzes the transfer of a GlcNAc subunit on undecaprenyl-pyrophosphoryl-MurNAc-pentapeptide (lipid intermediate I) to form undecaprenyl-pyrophosphoryl-MurNAc-(pentapeptide)GlcNAc (lipid intermediate II).</text>
</comment>
<comment type="catalytic activity">
    <reaction evidence="1">
        <text>di-trans,octa-cis-undecaprenyl diphospho-N-acetyl-alpha-D-muramoyl-L-alanyl-D-glutamyl-meso-2,6-diaminopimeloyl-D-alanyl-D-alanine + UDP-N-acetyl-alpha-D-glucosamine = di-trans,octa-cis-undecaprenyl diphospho-[N-acetyl-alpha-D-glucosaminyl-(1-&gt;4)]-N-acetyl-alpha-D-muramoyl-L-alanyl-D-glutamyl-meso-2,6-diaminopimeloyl-D-alanyl-D-alanine + UDP + H(+)</text>
        <dbReference type="Rhea" id="RHEA:31227"/>
        <dbReference type="ChEBI" id="CHEBI:15378"/>
        <dbReference type="ChEBI" id="CHEBI:57705"/>
        <dbReference type="ChEBI" id="CHEBI:58223"/>
        <dbReference type="ChEBI" id="CHEBI:61387"/>
        <dbReference type="ChEBI" id="CHEBI:61388"/>
        <dbReference type="EC" id="2.4.1.227"/>
    </reaction>
</comment>
<comment type="pathway">
    <text evidence="1">Cell wall biogenesis; peptidoglycan biosynthesis.</text>
</comment>
<comment type="subcellular location">
    <subcellularLocation>
        <location evidence="1">Cell membrane</location>
        <topology evidence="1">Peripheral membrane protein</topology>
        <orientation evidence="1">Cytoplasmic side</orientation>
    </subcellularLocation>
</comment>
<comment type="similarity">
    <text evidence="1">Belongs to the glycosyltransferase 28 family. MurG subfamily.</text>
</comment>
<feature type="chain" id="PRO_0000315072" description="UDP-N-acetylglucosamine--N-acetylmuramyl-(pentapeptide) pyrophosphoryl-undecaprenol N-acetylglucosamine transferase">
    <location>
        <begin position="1"/>
        <end position="393"/>
    </location>
</feature>
<feature type="binding site" evidence="1">
    <location>
        <begin position="14"/>
        <end position="16"/>
    </location>
    <ligand>
        <name>UDP-N-acetyl-alpha-D-glucosamine</name>
        <dbReference type="ChEBI" id="CHEBI:57705"/>
    </ligand>
</feature>
<feature type="binding site" evidence="1">
    <location>
        <position position="128"/>
    </location>
    <ligand>
        <name>UDP-N-acetyl-alpha-D-glucosamine</name>
        <dbReference type="ChEBI" id="CHEBI:57705"/>
    </ligand>
</feature>
<feature type="binding site" evidence="1">
    <location>
        <position position="170"/>
    </location>
    <ligand>
        <name>UDP-N-acetyl-alpha-D-glucosamine</name>
        <dbReference type="ChEBI" id="CHEBI:57705"/>
    </ligand>
</feature>
<feature type="binding site" evidence="1">
    <location>
        <position position="210"/>
    </location>
    <ligand>
        <name>UDP-N-acetyl-alpha-D-glucosamine</name>
        <dbReference type="ChEBI" id="CHEBI:57705"/>
    </ligand>
</feature>
<feature type="binding site" evidence="1">
    <location>
        <position position="321"/>
    </location>
    <ligand>
        <name>UDP-N-acetyl-alpha-D-glucosamine</name>
        <dbReference type="ChEBI" id="CHEBI:57705"/>
    </ligand>
</feature>
<protein>
    <recommendedName>
        <fullName evidence="1">UDP-N-acetylglucosamine--N-acetylmuramyl-(pentapeptide) pyrophosphoryl-undecaprenol N-acetylglucosamine transferase</fullName>
        <ecNumber evidence="1">2.4.1.227</ecNumber>
    </recommendedName>
    <alternativeName>
        <fullName evidence="1">Undecaprenyl-PP-MurNAc-pentapeptide-UDPGlcNAc GlcNAc transferase</fullName>
    </alternativeName>
</protein>
<evidence type="ECO:0000255" key="1">
    <source>
        <dbReference type="HAMAP-Rule" id="MF_00033"/>
    </source>
</evidence>